<protein>
    <recommendedName>
        <fullName>Uncharacterized protein MCAP_0864</fullName>
    </recommendedName>
    <alternativeName>
        <fullName>ORF R8</fullName>
    </alternativeName>
</protein>
<dbReference type="EMBL" id="CP000123">
    <property type="protein sequence ID" value="ABC01099.1"/>
    <property type="molecule type" value="Genomic_DNA"/>
</dbReference>
<dbReference type="EMBL" id="D14982">
    <property type="protein sequence ID" value="BAA20997.1"/>
    <property type="molecule type" value="Genomic_DNA"/>
</dbReference>
<dbReference type="PIR" id="S42127">
    <property type="entry name" value="S42127"/>
</dbReference>
<dbReference type="RefSeq" id="WP_011387690.1">
    <property type="nucleotide sequence ID" value="NC_007633.1"/>
</dbReference>
<dbReference type="SMR" id="P43047"/>
<dbReference type="GeneID" id="68902063"/>
<dbReference type="KEGG" id="mcp:MCAP_0864"/>
<dbReference type="HOGENOM" id="CLU_581164_0_0_14"/>
<dbReference type="PhylomeDB" id="P43047"/>
<dbReference type="Proteomes" id="UP000001928">
    <property type="component" value="Chromosome"/>
</dbReference>
<dbReference type="Gene3D" id="1.10.287.1490">
    <property type="match status" value="1"/>
</dbReference>
<dbReference type="InterPro" id="IPR030944">
    <property type="entry name" value="Mplasa_alph_rch"/>
</dbReference>
<dbReference type="NCBIfam" id="TIGR04523">
    <property type="entry name" value="Mplasa_alph_rch"/>
    <property type="match status" value="1"/>
</dbReference>
<dbReference type="PANTHER" id="PTHR18937">
    <property type="entry name" value="STRUCTURAL MAINTENANCE OF CHROMOSOMES SMC FAMILY MEMBER"/>
    <property type="match status" value="1"/>
</dbReference>
<organism>
    <name type="scientific">Mycoplasma capricolum subsp. capricolum (strain California kid / ATCC 27343 / NCTC 10154)</name>
    <dbReference type="NCBI Taxonomy" id="340047"/>
    <lineage>
        <taxon>Bacteria</taxon>
        <taxon>Bacillati</taxon>
        <taxon>Mycoplasmatota</taxon>
        <taxon>Mollicutes</taxon>
        <taxon>Mycoplasmataceae</taxon>
        <taxon>Mycoplasma</taxon>
    </lineage>
</organism>
<keyword id="KW-0732">Signal</keyword>
<accession>P43047</accession>
<accession>Q2SR07</accession>
<feature type="signal peptide" evidence="1">
    <location>
        <begin position="1"/>
        <end position="24"/>
    </location>
</feature>
<feature type="chain" id="PRO_0000066472" description="Uncharacterized protein MCAP_0864">
    <location>
        <begin position="25"/>
        <end position="470"/>
    </location>
</feature>
<evidence type="ECO:0000255" key="1"/>
<reference key="1">
    <citation type="submission" date="2005-09" db="EMBL/GenBank/DDBJ databases">
        <authorList>
            <person name="Glass J.I."/>
            <person name="Lartigue C."/>
            <person name="Pfannkoch C."/>
            <person name="Baden-Tillson H."/>
            <person name="Smith H.O."/>
            <person name="Venter J.C."/>
            <person name="Roske K."/>
            <person name="Wise K.S."/>
            <person name="Calcutt M.J."/>
            <person name="Nelson W.C."/>
            <person name="Nierman W.C."/>
        </authorList>
    </citation>
    <scope>NUCLEOTIDE SEQUENCE [LARGE SCALE GENOMIC DNA]</scope>
    <source>
        <strain>California kid / ATCC 27343 / NCTC 10154</strain>
    </source>
</reference>
<reference key="2">
    <citation type="journal article" date="1993" name="Nucleic Acids Res.">
        <title>Mapping of replication initiation site in Mycoplasma capricolum genome by two-dimensional gel-electrophoretic analysis.</title>
        <authorList>
            <person name="Miyata M."/>
            <person name="Sano K."/>
            <person name="Okada R."/>
            <person name="Fukumura T."/>
        </authorList>
    </citation>
    <scope>NUCLEOTIDE SEQUENCE [GENOMIC DNA] OF 1-89</scope>
</reference>
<name>Y864_MYCCT</name>
<sequence>MKKLVGSLAAISVLSATGFSYVGYKNVHNQKSVINTHQNEIKRIEKQLKSINNDINIKENELKSLLLEDEKNLISSKDKINKLKQEQRDLVKKDFDQKQMISKLTKDLTNLKLESETKKDQKAKVESELNNLKKTRKHKDELKDYFNKEIKNIQSELKNKTNEFTTNETKIESLKKELDELDKNKDQKKEELKSIKEIINKNYLLLFELNAKLSPYKKLEKQLLELKQQTSLLTKTKEEKQAEIDKQETILKDKQIQLSNLLEEINNNKTKLDQSDNELVNINQQIRDIESQIQNTNDEISKLKEEKEMDLVKVKSDITKINEQVNQLETQSNQTNTNISLLRQQIQKLDKQKETSTLNTQTLEKELNKKNIELEKLIKESESYSTSIKKLESERTQLQTKLDEIIKQNTQKEELIKQLEKELEKLSKRTQRLNVKKILLTSKVSELNKKISDKEKKITSLNKVIESEKK</sequence>
<gene>
    <name type="ordered locus">MCAP_0864</name>
</gene>
<proteinExistence type="inferred from homology"/>